<evidence type="ECO:0000250" key="1">
    <source>
        <dbReference type="UniProtKB" id="Q5M7W6"/>
    </source>
</evidence>
<evidence type="ECO:0000255" key="2"/>
<evidence type="ECO:0000256" key="3">
    <source>
        <dbReference type="SAM" id="MobiDB-lite"/>
    </source>
</evidence>
<evidence type="ECO:0000269" key="4">
    <source>
    </source>
</evidence>
<evidence type="ECO:0000269" key="5">
    <source>
    </source>
</evidence>
<evidence type="ECO:0000305" key="6"/>
<evidence type="ECO:0000312" key="7">
    <source>
        <dbReference type="MGI" id="MGI:2146854"/>
    </source>
</evidence>
<proteinExistence type="evidence at protein level"/>
<dbReference type="EMBL" id="AK029427">
    <property type="protein sequence ID" value="BAC26447.1"/>
    <property type="molecule type" value="mRNA"/>
</dbReference>
<dbReference type="EMBL" id="AK158049">
    <property type="protein sequence ID" value="BAE34336.1"/>
    <property type="molecule type" value="mRNA"/>
</dbReference>
<dbReference type="EMBL" id="AK170646">
    <property type="protein sequence ID" value="BAE41933.1"/>
    <property type="molecule type" value="mRNA"/>
</dbReference>
<dbReference type="EMBL" id="BC046457">
    <property type="protein sequence ID" value="AAH46457.1"/>
    <property type="molecule type" value="mRNA"/>
</dbReference>
<dbReference type="CCDS" id="CCDS37512.1"/>
<dbReference type="RefSeq" id="NP_001193264.1">
    <property type="nucleotide sequence ID" value="NM_001206335.2"/>
</dbReference>
<dbReference type="RefSeq" id="NP_001344823.1">
    <property type="nucleotide sequence ID" value="NM_001357894.2"/>
</dbReference>
<dbReference type="RefSeq" id="NP_001387178.1">
    <property type="nucleotide sequence ID" value="NM_001400249.1"/>
</dbReference>
<dbReference type="RefSeq" id="NP_001387179.1">
    <property type="nucleotide sequence ID" value="NM_001400250.1"/>
</dbReference>
<dbReference type="RefSeq" id="NP_001387180.1">
    <property type="nucleotide sequence ID" value="NM_001400251.1"/>
</dbReference>
<dbReference type="RefSeq" id="NP_997100.1">
    <property type="nucleotide sequence ID" value="NM_207217.5"/>
</dbReference>
<dbReference type="RefSeq" id="XP_006523453.1">
    <property type="nucleotide sequence ID" value="XM_006523390.3"/>
</dbReference>
<dbReference type="RefSeq" id="XP_011244538.1">
    <property type="nucleotide sequence ID" value="XM_011246236.2"/>
</dbReference>
<dbReference type="RefSeq" id="XP_011244539.1">
    <property type="nucleotide sequence ID" value="XM_011246237.3"/>
</dbReference>
<dbReference type="RefSeq" id="XP_036016135.1">
    <property type="nucleotide sequence ID" value="XM_036160242.1"/>
</dbReference>
<dbReference type="FunCoup" id="Q8C0Z1">
    <property type="interactions" value="125"/>
</dbReference>
<dbReference type="STRING" id="10090.ENSMUSP00000110639"/>
<dbReference type="GlyConnect" id="2629">
    <property type="glycosylation" value="1 N-Linked glycan (1 site)"/>
</dbReference>
<dbReference type="GlyCosmos" id="Q8C0Z1">
    <property type="glycosylation" value="6 sites, 1 glycan"/>
</dbReference>
<dbReference type="GlyGen" id="Q8C0Z1">
    <property type="glycosylation" value="6 sites, 5 N-linked glycans (4 sites)"/>
</dbReference>
<dbReference type="iPTMnet" id="Q8C0Z1"/>
<dbReference type="PhosphoSitePlus" id="Q8C0Z1"/>
<dbReference type="SwissPalm" id="Q8C0Z1"/>
<dbReference type="jPOST" id="Q8C0Z1"/>
<dbReference type="PaxDb" id="10090-ENSMUSP00000110639"/>
<dbReference type="PeptideAtlas" id="Q8C0Z1"/>
<dbReference type="ProteomicsDB" id="267693"/>
<dbReference type="Pumba" id="Q8C0Z1"/>
<dbReference type="Antibodypedia" id="2603">
    <property type="antibodies" value="145 antibodies from 22 providers"/>
</dbReference>
<dbReference type="DNASU" id="106581"/>
<dbReference type="Ensembl" id="ENSMUST00000114988.8">
    <property type="protein sequence ID" value="ENSMUSP00000110639.2"/>
    <property type="gene ID" value="ENSMUSG00000024187.16"/>
</dbReference>
<dbReference type="Ensembl" id="ENSMUST00000118487.8">
    <property type="protein sequence ID" value="ENSMUSP00000113418.2"/>
    <property type="gene ID" value="ENSMUSG00000024187.16"/>
</dbReference>
<dbReference type="Ensembl" id="ENSMUST00000234175.2">
    <property type="protein sequence ID" value="ENSMUSP00000157032.2"/>
    <property type="gene ID" value="ENSMUSG00000024187.16"/>
</dbReference>
<dbReference type="Ensembl" id="ENSMUST00000234262.2">
    <property type="protein sequence ID" value="ENSMUSP00000157155.2"/>
    <property type="gene ID" value="ENSMUSG00000024187.16"/>
</dbReference>
<dbReference type="Ensembl" id="ENSMUST00000234554.2">
    <property type="protein sequence ID" value="ENSMUSP00000157362.2"/>
    <property type="gene ID" value="ENSMUSG00000024187.16"/>
</dbReference>
<dbReference type="Ensembl" id="ENSMUST00000234687.2">
    <property type="protein sequence ID" value="ENSMUSP00000157219.2"/>
    <property type="gene ID" value="ENSMUSG00000024187.16"/>
</dbReference>
<dbReference type="GeneID" id="106581"/>
<dbReference type="KEGG" id="mmu:106581"/>
<dbReference type="UCSC" id="uc008bdv.2">
    <property type="organism name" value="mouse"/>
</dbReference>
<dbReference type="AGR" id="MGI:2146854"/>
<dbReference type="CTD" id="83986"/>
<dbReference type="MGI" id="MGI:2146854">
    <property type="gene designation" value="Fam234a"/>
</dbReference>
<dbReference type="VEuPathDB" id="HostDB:ENSMUSG00000024187"/>
<dbReference type="eggNOG" id="ENOG502R0CE">
    <property type="taxonomic scope" value="Eukaryota"/>
</dbReference>
<dbReference type="GeneTree" id="ENSGT00530000063694"/>
<dbReference type="HOGENOM" id="CLU_036490_0_0_1"/>
<dbReference type="InParanoid" id="Q8C0Z1"/>
<dbReference type="OMA" id="FMFWGLM"/>
<dbReference type="OrthoDB" id="6364780at2759"/>
<dbReference type="PhylomeDB" id="Q8C0Z1"/>
<dbReference type="TreeFam" id="TF327203"/>
<dbReference type="BioGRID-ORCS" id="106581">
    <property type="hits" value="4 hits in 46 CRISPR screens"/>
</dbReference>
<dbReference type="ChiTaRS" id="Fam234a">
    <property type="organism name" value="mouse"/>
</dbReference>
<dbReference type="PRO" id="PR:Q8C0Z1"/>
<dbReference type="Proteomes" id="UP000000589">
    <property type="component" value="Chromosome 17"/>
</dbReference>
<dbReference type="RNAct" id="Q8C0Z1">
    <property type="molecule type" value="protein"/>
</dbReference>
<dbReference type="Bgee" id="ENSMUSG00000024187">
    <property type="expression patterns" value="Expressed in interventricular septum and 228 other cell types or tissues"/>
</dbReference>
<dbReference type="ExpressionAtlas" id="Q8C0Z1">
    <property type="expression patterns" value="baseline and differential"/>
</dbReference>
<dbReference type="GO" id="GO:0009986">
    <property type="term" value="C:cell surface"/>
    <property type="evidence" value="ECO:0007669"/>
    <property type="project" value="Ensembl"/>
</dbReference>
<dbReference type="GO" id="GO:0016020">
    <property type="term" value="C:membrane"/>
    <property type="evidence" value="ECO:0007669"/>
    <property type="project" value="UniProtKB-SubCell"/>
</dbReference>
<dbReference type="InterPro" id="IPR045232">
    <property type="entry name" value="FAM234"/>
</dbReference>
<dbReference type="InterPro" id="IPR055409">
    <property type="entry name" value="FAM234A_B_beta-prop"/>
</dbReference>
<dbReference type="InterPro" id="IPR011047">
    <property type="entry name" value="Quinoprotein_ADH-like_sf"/>
</dbReference>
<dbReference type="PANTHER" id="PTHR21419">
    <property type="match status" value="1"/>
</dbReference>
<dbReference type="PANTHER" id="PTHR21419:SF7">
    <property type="entry name" value="PROTEIN FAM234A"/>
    <property type="match status" value="1"/>
</dbReference>
<dbReference type="Pfam" id="PF23727">
    <property type="entry name" value="Beta-prop_FAM234A_B"/>
    <property type="match status" value="1"/>
</dbReference>
<dbReference type="SUPFAM" id="SSF50998">
    <property type="entry name" value="Quinoprotein alcohol dehydrogenase-like"/>
    <property type="match status" value="1"/>
</dbReference>
<accession>Q8C0Z1</accession>
<accession>Q3TZ74</accession>
<feature type="chain" id="PRO_0000247994" description="Protein FAM234A">
    <location>
        <begin position="1"/>
        <end position="555"/>
    </location>
</feature>
<feature type="topological domain" description="Cytoplasmic" evidence="2">
    <location>
        <begin position="1"/>
        <end position="49"/>
    </location>
</feature>
<feature type="transmembrane region" description="Helical; Signal-anchor for type II membrane protein" evidence="2">
    <location>
        <begin position="50"/>
        <end position="70"/>
    </location>
</feature>
<feature type="topological domain" description="Extracellular" evidence="2">
    <location>
        <begin position="71"/>
        <end position="555"/>
    </location>
</feature>
<feature type="region of interest" description="Disordered" evidence="3">
    <location>
        <begin position="1"/>
        <end position="40"/>
    </location>
</feature>
<feature type="compositionally biased region" description="Basic and acidic residues" evidence="3">
    <location>
        <begin position="1"/>
        <end position="22"/>
    </location>
</feature>
<feature type="modified residue" description="Phosphoserine" evidence="1">
    <location>
        <position position="21"/>
    </location>
</feature>
<feature type="glycosylation site" description="N-linked (GlcNAc...) asparagine" evidence="4 5">
    <location>
        <position position="116"/>
    </location>
</feature>
<feature type="glycosylation site" description="N-linked (GlcNAc...) asparagine" evidence="4 5">
    <location>
        <position position="120"/>
    </location>
</feature>
<feature type="glycosylation site" description="N-linked (GlcNAc...) asparagine" evidence="2">
    <location>
        <position position="317"/>
    </location>
</feature>
<feature type="glycosylation site" description="N-linked (GlcNAc...) asparagine" evidence="4 5">
    <location>
        <position position="392"/>
    </location>
</feature>
<feature type="glycosylation site" description="N-linked (GlcNAc...) asparagine" evidence="2">
    <location>
        <position position="476"/>
    </location>
</feature>
<feature type="sequence conflict" description="In Ref. 1; BAE34336." evidence="6" ref="1">
    <original>R</original>
    <variation>G</variation>
    <location>
        <position position="182"/>
    </location>
</feature>
<feature type="sequence conflict" description="In Ref. 1; BAE34336." evidence="6" ref="1">
    <original>L</original>
    <variation>V</variation>
    <location>
        <position position="244"/>
    </location>
</feature>
<feature type="sequence conflict" description="In Ref. 1; BAE34336." evidence="6" ref="1">
    <original>V</original>
    <variation>A</variation>
    <location>
        <position position="514"/>
    </location>
</feature>
<organism>
    <name type="scientific">Mus musculus</name>
    <name type="common">Mouse</name>
    <dbReference type="NCBI Taxonomy" id="10090"/>
    <lineage>
        <taxon>Eukaryota</taxon>
        <taxon>Metazoa</taxon>
        <taxon>Chordata</taxon>
        <taxon>Craniata</taxon>
        <taxon>Vertebrata</taxon>
        <taxon>Euteleostomi</taxon>
        <taxon>Mammalia</taxon>
        <taxon>Eutheria</taxon>
        <taxon>Euarchontoglires</taxon>
        <taxon>Glires</taxon>
        <taxon>Rodentia</taxon>
        <taxon>Myomorpha</taxon>
        <taxon>Muroidea</taxon>
        <taxon>Muridae</taxon>
        <taxon>Murinae</taxon>
        <taxon>Mus</taxon>
        <taxon>Mus</taxon>
    </lineage>
</organism>
<comment type="subcellular location">
    <subcellularLocation>
        <location evidence="6">Membrane</location>
        <topology evidence="6">Single-pass type II membrane protein</topology>
    </subcellularLocation>
</comment>
<comment type="similarity">
    <text evidence="6">Belongs to the FAM234 family.</text>
</comment>
<keyword id="KW-0325">Glycoprotein</keyword>
<keyword id="KW-0472">Membrane</keyword>
<keyword id="KW-0597">Phosphoprotein</keyword>
<keyword id="KW-1185">Reference proteome</keyword>
<keyword id="KW-0735">Signal-anchor</keyword>
<keyword id="KW-0812">Transmembrane</keyword>
<keyword id="KW-1133">Transmembrane helix</keyword>
<protein>
    <recommendedName>
        <fullName>Protein FAM234A</fullName>
    </recommendedName>
    <alternativeName>
        <fullName>Protein ITFG3</fullName>
    </alternativeName>
</protein>
<gene>
    <name evidence="7" type="primary">Fam234a</name>
    <name type="synonym">Itfg3</name>
</gene>
<name>F234A_MOUSE</name>
<reference key="1">
    <citation type="journal article" date="2005" name="Science">
        <title>The transcriptional landscape of the mammalian genome.</title>
        <authorList>
            <person name="Carninci P."/>
            <person name="Kasukawa T."/>
            <person name="Katayama S."/>
            <person name="Gough J."/>
            <person name="Frith M.C."/>
            <person name="Maeda N."/>
            <person name="Oyama R."/>
            <person name="Ravasi T."/>
            <person name="Lenhard B."/>
            <person name="Wells C."/>
            <person name="Kodzius R."/>
            <person name="Shimokawa K."/>
            <person name="Bajic V.B."/>
            <person name="Brenner S.E."/>
            <person name="Batalov S."/>
            <person name="Forrest A.R."/>
            <person name="Zavolan M."/>
            <person name="Davis M.J."/>
            <person name="Wilming L.G."/>
            <person name="Aidinis V."/>
            <person name="Allen J.E."/>
            <person name="Ambesi-Impiombato A."/>
            <person name="Apweiler R."/>
            <person name="Aturaliya R.N."/>
            <person name="Bailey T.L."/>
            <person name="Bansal M."/>
            <person name="Baxter L."/>
            <person name="Beisel K.W."/>
            <person name="Bersano T."/>
            <person name="Bono H."/>
            <person name="Chalk A.M."/>
            <person name="Chiu K.P."/>
            <person name="Choudhary V."/>
            <person name="Christoffels A."/>
            <person name="Clutterbuck D.R."/>
            <person name="Crowe M.L."/>
            <person name="Dalla E."/>
            <person name="Dalrymple B.P."/>
            <person name="de Bono B."/>
            <person name="Della Gatta G."/>
            <person name="di Bernardo D."/>
            <person name="Down T."/>
            <person name="Engstrom P."/>
            <person name="Fagiolini M."/>
            <person name="Faulkner G."/>
            <person name="Fletcher C.F."/>
            <person name="Fukushima T."/>
            <person name="Furuno M."/>
            <person name="Futaki S."/>
            <person name="Gariboldi M."/>
            <person name="Georgii-Hemming P."/>
            <person name="Gingeras T.R."/>
            <person name="Gojobori T."/>
            <person name="Green R.E."/>
            <person name="Gustincich S."/>
            <person name="Harbers M."/>
            <person name="Hayashi Y."/>
            <person name="Hensch T.K."/>
            <person name="Hirokawa N."/>
            <person name="Hill D."/>
            <person name="Huminiecki L."/>
            <person name="Iacono M."/>
            <person name="Ikeo K."/>
            <person name="Iwama A."/>
            <person name="Ishikawa T."/>
            <person name="Jakt M."/>
            <person name="Kanapin A."/>
            <person name="Katoh M."/>
            <person name="Kawasawa Y."/>
            <person name="Kelso J."/>
            <person name="Kitamura H."/>
            <person name="Kitano H."/>
            <person name="Kollias G."/>
            <person name="Krishnan S.P."/>
            <person name="Kruger A."/>
            <person name="Kummerfeld S.K."/>
            <person name="Kurochkin I.V."/>
            <person name="Lareau L.F."/>
            <person name="Lazarevic D."/>
            <person name="Lipovich L."/>
            <person name="Liu J."/>
            <person name="Liuni S."/>
            <person name="McWilliam S."/>
            <person name="Madan Babu M."/>
            <person name="Madera M."/>
            <person name="Marchionni L."/>
            <person name="Matsuda H."/>
            <person name="Matsuzawa S."/>
            <person name="Miki H."/>
            <person name="Mignone F."/>
            <person name="Miyake S."/>
            <person name="Morris K."/>
            <person name="Mottagui-Tabar S."/>
            <person name="Mulder N."/>
            <person name="Nakano N."/>
            <person name="Nakauchi H."/>
            <person name="Ng P."/>
            <person name="Nilsson R."/>
            <person name="Nishiguchi S."/>
            <person name="Nishikawa S."/>
            <person name="Nori F."/>
            <person name="Ohara O."/>
            <person name="Okazaki Y."/>
            <person name="Orlando V."/>
            <person name="Pang K.C."/>
            <person name="Pavan W.J."/>
            <person name="Pavesi G."/>
            <person name="Pesole G."/>
            <person name="Petrovsky N."/>
            <person name="Piazza S."/>
            <person name="Reed J."/>
            <person name="Reid J.F."/>
            <person name="Ring B.Z."/>
            <person name="Ringwald M."/>
            <person name="Rost B."/>
            <person name="Ruan Y."/>
            <person name="Salzberg S.L."/>
            <person name="Sandelin A."/>
            <person name="Schneider C."/>
            <person name="Schoenbach C."/>
            <person name="Sekiguchi K."/>
            <person name="Semple C.A."/>
            <person name="Seno S."/>
            <person name="Sessa L."/>
            <person name="Sheng Y."/>
            <person name="Shibata Y."/>
            <person name="Shimada H."/>
            <person name="Shimada K."/>
            <person name="Silva D."/>
            <person name="Sinclair B."/>
            <person name="Sperling S."/>
            <person name="Stupka E."/>
            <person name="Sugiura K."/>
            <person name="Sultana R."/>
            <person name="Takenaka Y."/>
            <person name="Taki K."/>
            <person name="Tammoja K."/>
            <person name="Tan S.L."/>
            <person name="Tang S."/>
            <person name="Taylor M.S."/>
            <person name="Tegner J."/>
            <person name="Teichmann S.A."/>
            <person name="Ueda H.R."/>
            <person name="van Nimwegen E."/>
            <person name="Verardo R."/>
            <person name="Wei C.L."/>
            <person name="Yagi K."/>
            <person name="Yamanishi H."/>
            <person name="Zabarovsky E."/>
            <person name="Zhu S."/>
            <person name="Zimmer A."/>
            <person name="Hide W."/>
            <person name="Bult C."/>
            <person name="Grimmond S.M."/>
            <person name="Teasdale R.D."/>
            <person name="Liu E.T."/>
            <person name="Brusic V."/>
            <person name="Quackenbush J."/>
            <person name="Wahlestedt C."/>
            <person name="Mattick J.S."/>
            <person name="Hume D.A."/>
            <person name="Kai C."/>
            <person name="Sasaki D."/>
            <person name="Tomaru Y."/>
            <person name="Fukuda S."/>
            <person name="Kanamori-Katayama M."/>
            <person name="Suzuki M."/>
            <person name="Aoki J."/>
            <person name="Arakawa T."/>
            <person name="Iida J."/>
            <person name="Imamura K."/>
            <person name="Itoh M."/>
            <person name="Kato T."/>
            <person name="Kawaji H."/>
            <person name="Kawagashira N."/>
            <person name="Kawashima T."/>
            <person name="Kojima M."/>
            <person name="Kondo S."/>
            <person name="Konno H."/>
            <person name="Nakano K."/>
            <person name="Ninomiya N."/>
            <person name="Nishio T."/>
            <person name="Okada M."/>
            <person name="Plessy C."/>
            <person name="Shibata K."/>
            <person name="Shiraki T."/>
            <person name="Suzuki S."/>
            <person name="Tagami M."/>
            <person name="Waki K."/>
            <person name="Watahiki A."/>
            <person name="Okamura-Oho Y."/>
            <person name="Suzuki H."/>
            <person name="Kawai J."/>
            <person name="Hayashizaki Y."/>
        </authorList>
    </citation>
    <scope>NUCLEOTIDE SEQUENCE [LARGE SCALE MRNA]</scope>
    <source>
        <strain>C57BL/6J</strain>
        <strain>NOD</strain>
        <tissue>Dendritic cell</tissue>
        <tissue>Head</tissue>
        <tissue>Inner ear</tissue>
    </source>
</reference>
<reference key="2">
    <citation type="journal article" date="2004" name="Genome Res.">
        <title>The status, quality, and expansion of the NIH full-length cDNA project: the Mammalian Gene Collection (MGC).</title>
        <authorList>
            <consortium name="The MGC Project Team"/>
        </authorList>
    </citation>
    <scope>NUCLEOTIDE SEQUENCE [LARGE SCALE MRNA]</scope>
    <source>
        <strain>FVB/N</strain>
        <tissue>Kidney</tissue>
    </source>
</reference>
<reference key="3">
    <citation type="journal article" date="2009" name="Mol. Cell. Proteomics">
        <title>The mouse C2C12 myoblast cell surface N-linked glycoproteome: identification, glycosite occupancy, and membrane orientation.</title>
        <authorList>
            <person name="Gundry R.L."/>
            <person name="Raginski K."/>
            <person name="Tarasova Y."/>
            <person name="Tchernyshyov I."/>
            <person name="Bausch-Fluck D."/>
            <person name="Elliott S.T."/>
            <person name="Boheler K.R."/>
            <person name="Van Eyk J.E."/>
            <person name="Wollscheid B."/>
        </authorList>
    </citation>
    <scope>GLYCOSYLATION [LARGE SCALE ANALYSIS] AT ASN-116; ASN-120 AND ASN-392</scope>
    <source>
        <tissue>Myoblast</tissue>
    </source>
</reference>
<reference key="4">
    <citation type="journal article" date="2009" name="Nat. Biotechnol.">
        <title>Mass-spectrometric identification and relative quantification of N-linked cell surface glycoproteins.</title>
        <authorList>
            <person name="Wollscheid B."/>
            <person name="Bausch-Fluck D."/>
            <person name="Henderson C."/>
            <person name="O'Brien R."/>
            <person name="Bibel M."/>
            <person name="Schiess R."/>
            <person name="Aebersold R."/>
            <person name="Watts J.D."/>
        </authorList>
    </citation>
    <scope>GLYCOSYLATION [LARGE SCALE ANALYSIS] AT ASN-116; ASN-120 AND ASN-392</scope>
</reference>
<reference key="5">
    <citation type="journal article" date="2010" name="Cell">
        <title>A tissue-specific atlas of mouse protein phosphorylation and expression.</title>
        <authorList>
            <person name="Huttlin E.L."/>
            <person name="Jedrychowski M.P."/>
            <person name="Elias J.E."/>
            <person name="Goswami T."/>
            <person name="Rad R."/>
            <person name="Beausoleil S.A."/>
            <person name="Villen J."/>
            <person name="Haas W."/>
            <person name="Sowa M.E."/>
            <person name="Gygi S.P."/>
        </authorList>
    </citation>
    <scope>IDENTIFICATION BY MASS SPECTROMETRY [LARGE SCALE ANALYSIS]</scope>
    <source>
        <tissue>Brown adipose tissue</tissue>
        <tissue>Heart</tissue>
        <tissue>Kidney</tissue>
        <tissue>Liver</tissue>
        <tissue>Lung</tissue>
        <tissue>Pancreas</tissue>
        <tissue>Testis</tissue>
    </source>
</reference>
<sequence>MMDNKDLEAEIHPLKNEDKKSQENPGNLPRNEDNLKSKPVPSRLSRCRTVAFFLSLFTCLFVVFVLSFIIPCPDRPSSQGTWKLDYNNAVMYDFLALGDINKDKVQDVLFLYKNTNSSNNLTRSCADEGFSTPCAFVVAVSGANGSVLWERPVAQDVALVKCAMPQTLDSDEVSSACIVVGRAGSFVAVSFFTGETLWSHPSSFSGNVSILSPLLQVPDIDGDGDGTPDLLILAQEGQEVSGALYSGSTGYQIGHRGSLGVDGDGVALLHVTRTGAQYILLPCASALCGFSVKSLYERITGRDGHFKEDPYWENMLNHSVHRRLLHRLGAVRYLMNIPGKAGQDLLLVTSEACVLLDGQDLEPRWTLGEVQVLRKPILGHYKPDTLAVVIENGTSIDRQILLLDLSTGSILWSQPLPSLPGGPPSTSLMTADHRSAFFFWGLHDLVSTNEMDPPDVQHSLYMFHPTLPGILLELANVSANIVAFDAVLLEPSRHAAYVLLTGPASSDVPGLVSVTKHKVQDLVPGSRVIHLGEGSSDSDQAIRDRFSRLRYRSEM</sequence>